<organism>
    <name type="scientific">Bacillus subtilis (strain 168)</name>
    <dbReference type="NCBI Taxonomy" id="224308"/>
    <lineage>
        <taxon>Bacteria</taxon>
        <taxon>Bacillati</taxon>
        <taxon>Bacillota</taxon>
        <taxon>Bacilli</taxon>
        <taxon>Bacillales</taxon>
        <taxon>Bacillaceae</taxon>
        <taxon>Bacillus</taxon>
    </lineage>
</organism>
<proteinExistence type="inferred from homology"/>
<reference key="1">
    <citation type="journal article" date="1998" name="DNA Res.">
        <title>Sequence analysis of the Bacillus subtilis 168 chromosome region between the sspC and odhA loci (184 degrees-180 degrees).</title>
        <authorList>
            <person name="Ghim S.-Y."/>
            <person name="Choi S.-K."/>
            <person name="Shin B.-S."/>
            <person name="Jeong Y.-M."/>
            <person name="Sorokin A."/>
            <person name="Ehrlich S.D."/>
            <person name="Park S.-H."/>
        </authorList>
    </citation>
    <scope>NUCLEOTIDE SEQUENCE [GENOMIC DNA]</scope>
    <source>
        <strain>168</strain>
    </source>
</reference>
<reference key="2">
    <citation type="journal article" date="1997" name="Nature">
        <title>The complete genome sequence of the Gram-positive bacterium Bacillus subtilis.</title>
        <authorList>
            <person name="Kunst F."/>
            <person name="Ogasawara N."/>
            <person name="Moszer I."/>
            <person name="Albertini A.M."/>
            <person name="Alloni G."/>
            <person name="Azevedo V."/>
            <person name="Bertero M.G."/>
            <person name="Bessieres P."/>
            <person name="Bolotin A."/>
            <person name="Borchert S."/>
            <person name="Borriss R."/>
            <person name="Boursier L."/>
            <person name="Brans A."/>
            <person name="Braun M."/>
            <person name="Brignell S.C."/>
            <person name="Bron S."/>
            <person name="Brouillet S."/>
            <person name="Bruschi C.V."/>
            <person name="Caldwell B."/>
            <person name="Capuano V."/>
            <person name="Carter N.M."/>
            <person name="Choi S.-K."/>
            <person name="Codani J.-J."/>
            <person name="Connerton I.F."/>
            <person name="Cummings N.J."/>
            <person name="Daniel R.A."/>
            <person name="Denizot F."/>
            <person name="Devine K.M."/>
            <person name="Duesterhoeft A."/>
            <person name="Ehrlich S.D."/>
            <person name="Emmerson P.T."/>
            <person name="Entian K.-D."/>
            <person name="Errington J."/>
            <person name="Fabret C."/>
            <person name="Ferrari E."/>
            <person name="Foulger D."/>
            <person name="Fritz C."/>
            <person name="Fujita M."/>
            <person name="Fujita Y."/>
            <person name="Fuma S."/>
            <person name="Galizzi A."/>
            <person name="Galleron N."/>
            <person name="Ghim S.-Y."/>
            <person name="Glaser P."/>
            <person name="Goffeau A."/>
            <person name="Golightly E.J."/>
            <person name="Grandi G."/>
            <person name="Guiseppi G."/>
            <person name="Guy B.J."/>
            <person name="Haga K."/>
            <person name="Haiech J."/>
            <person name="Harwood C.R."/>
            <person name="Henaut A."/>
            <person name="Hilbert H."/>
            <person name="Holsappel S."/>
            <person name="Hosono S."/>
            <person name="Hullo M.-F."/>
            <person name="Itaya M."/>
            <person name="Jones L.-M."/>
            <person name="Joris B."/>
            <person name="Karamata D."/>
            <person name="Kasahara Y."/>
            <person name="Klaerr-Blanchard M."/>
            <person name="Klein C."/>
            <person name="Kobayashi Y."/>
            <person name="Koetter P."/>
            <person name="Koningstein G."/>
            <person name="Krogh S."/>
            <person name="Kumano M."/>
            <person name="Kurita K."/>
            <person name="Lapidus A."/>
            <person name="Lardinois S."/>
            <person name="Lauber J."/>
            <person name="Lazarevic V."/>
            <person name="Lee S.-M."/>
            <person name="Levine A."/>
            <person name="Liu H."/>
            <person name="Masuda S."/>
            <person name="Mauel C."/>
            <person name="Medigue C."/>
            <person name="Medina N."/>
            <person name="Mellado R.P."/>
            <person name="Mizuno M."/>
            <person name="Moestl D."/>
            <person name="Nakai S."/>
            <person name="Noback M."/>
            <person name="Noone D."/>
            <person name="O'Reilly M."/>
            <person name="Ogawa K."/>
            <person name="Ogiwara A."/>
            <person name="Oudega B."/>
            <person name="Park S.-H."/>
            <person name="Parro V."/>
            <person name="Pohl T.M."/>
            <person name="Portetelle D."/>
            <person name="Porwollik S."/>
            <person name="Prescott A.M."/>
            <person name="Presecan E."/>
            <person name="Pujic P."/>
            <person name="Purnelle B."/>
            <person name="Rapoport G."/>
            <person name="Rey M."/>
            <person name="Reynolds S."/>
            <person name="Rieger M."/>
            <person name="Rivolta C."/>
            <person name="Rocha E."/>
            <person name="Roche B."/>
            <person name="Rose M."/>
            <person name="Sadaie Y."/>
            <person name="Sato T."/>
            <person name="Scanlan E."/>
            <person name="Schleich S."/>
            <person name="Schroeter R."/>
            <person name="Scoffone F."/>
            <person name="Sekiguchi J."/>
            <person name="Sekowska A."/>
            <person name="Seror S.J."/>
            <person name="Serror P."/>
            <person name="Shin B.-S."/>
            <person name="Soldo B."/>
            <person name="Sorokin A."/>
            <person name="Tacconi E."/>
            <person name="Takagi T."/>
            <person name="Takahashi H."/>
            <person name="Takemaru K."/>
            <person name="Takeuchi M."/>
            <person name="Tamakoshi A."/>
            <person name="Tanaka T."/>
            <person name="Terpstra P."/>
            <person name="Tognoni A."/>
            <person name="Tosato V."/>
            <person name="Uchiyama S."/>
            <person name="Vandenbol M."/>
            <person name="Vannier F."/>
            <person name="Vassarotti A."/>
            <person name="Viari A."/>
            <person name="Wambutt R."/>
            <person name="Wedler E."/>
            <person name="Wedler H."/>
            <person name="Weitzenegger T."/>
            <person name="Winters P."/>
            <person name="Wipat A."/>
            <person name="Yamamoto H."/>
            <person name="Yamane K."/>
            <person name="Yasumoto K."/>
            <person name="Yata K."/>
            <person name="Yoshida K."/>
            <person name="Yoshikawa H.-F."/>
            <person name="Zumstein E."/>
            <person name="Yoshikawa H."/>
            <person name="Danchin A."/>
        </authorList>
    </citation>
    <scope>NUCLEOTIDE SEQUENCE [LARGE SCALE GENOMIC DNA]</scope>
    <source>
        <strain>168</strain>
    </source>
</reference>
<evidence type="ECO:0000255" key="1"/>
<evidence type="ECO:0000305" key="2"/>
<feature type="chain" id="PRO_0000387987" description="Uncharacterized protein YojN">
    <location>
        <begin position="1"/>
        <end position="304"/>
    </location>
</feature>
<feature type="binding site" evidence="1">
    <location>
        <begin position="72"/>
        <end position="79"/>
    </location>
    <ligand>
        <name>ATP</name>
        <dbReference type="ChEBI" id="CHEBI:30616"/>
    </ligand>
</feature>
<name>YOJN_BACSU</name>
<protein>
    <recommendedName>
        <fullName>Uncharacterized protein YojN</fullName>
    </recommendedName>
</protein>
<accession>O31850</accession>
<accession>Q7BV93</accession>
<gene>
    <name type="primary">yojN</name>
    <name type="ordered locus">BSU19390</name>
</gene>
<keyword id="KW-0067">ATP-binding</keyword>
<keyword id="KW-0547">Nucleotide-binding</keyword>
<keyword id="KW-1185">Reference proteome</keyword>
<comment type="similarity">
    <text evidence="2">Belongs to the CbbQ/NirQ/NorQ/GpvN family.</text>
</comment>
<sequence>MNRKGNLSMTTQLQHLTLPEDIQQKLLSYKEQPISPEFQSLIGTSGYEAEDEAILFDAIIALAMGKNVLLKGPTGSGKTKLAETLSSYFHKPMHSVNCSVDLDAEALVGYKTIENQSGQATIEFVSGPVTKAMKEGHFLYIDEINMAKPETLPILNGVLDYRKMMTNPFTGEVIRAKSGFGVIAAINEGYVGTVPLNEALKNRFVIIDVPYIKGELLKQVLMSQSALKDEKLIDRFITLSSDLIVQANNGQVSEEAASIRALIDTCDLAAYIPPRRAIERGIVEKLDDDREKAAVRNIAETLFE</sequence>
<dbReference type="EMBL" id="AF026147">
    <property type="protein sequence ID" value="AAC17862.1"/>
    <property type="molecule type" value="Genomic_DNA"/>
</dbReference>
<dbReference type="EMBL" id="AL009126">
    <property type="protein sequence ID" value="CAB13831.1"/>
    <property type="molecule type" value="Genomic_DNA"/>
</dbReference>
<dbReference type="PIR" id="C69907">
    <property type="entry name" value="C69907"/>
</dbReference>
<dbReference type="RefSeq" id="NP_389821.1">
    <property type="nucleotide sequence ID" value="NC_000964.3"/>
</dbReference>
<dbReference type="RefSeq" id="WP_010886530.1">
    <property type="nucleotide sequence ID" value="NZ_OZ025638.1"/>
</dbReference>
<dbReference type="SMR" id="O31850"/>
<dbReference type="FunCoup" id="O31850">
    <property type="interactions" value="44"/>
</dbReference>
<dbReference type="STRING" id="224308.BSU19390"/>
<dbReference type="PaxDb" id="224308-BSU19390"/>
<dbReference type="EnsemblBacteria" id="CAB13831">
    <property type="protein sequence ID" value="CAB13831"/>
    <property type="gene ID" value="BSU_19390"/>
</dbReference>
<dbReference type="GeneID" id="939458"/>
<dbReference type="KEGG" id="bsu:BSU19390"/>
<dbReference type="PATRIC" id="fig|224308.43.peg.2055"/>
<dbReference type="eggNOG" id="COG0714">
    <property type="taxonomic scope" value="Bacteria"/>
</dbReference>
<dbReference type="InParanoid" id="O31850"/>
<dbReference type="OrthoDB" id="9808317at2"/>
<dbReference type="PhylomeDB" id="O31850"/>
<dbReference type="BioCyc" id="BSUB:BSU19390-MONOMER"/>
<dbReference type="Proteomes" id="UP000001570">
    <property type="component" value="Chromosome"/>
</dbReference>
<dbReference type="GO" id="GO:0005524">
    <property type="term" value="F:ATP binding"/>
    <property type="evidence" value="ECO:0007669"/>
    <property type="project" value="UniProtKB-KW"/>
</dbReference>
<dbReference type="GO" id="GO:0016887">
    <property type="term" value="F:ATP hydrolysis activity"/>
    <property type="evidence" value="ECO:0007669"/>
    <property type="project" value="InterPro"/>
</dbReference>
<dbReference type="CDD" id="cd00009">
    <property type="entry name" value="AAA"/>
    <property type="match status" value="1"/>
</dbReference>
<dbReference type="Gene3D" id="3.40.50.300">
    <property type="entry name" value="P-loop containing nucleotide triphosphate hydrolases"/>
    <property type="match status" value="1"/>
</dbReference>
<dbReference type="InterPro" id="IPR003593">
    <property type="entry name" value="AAA+_ATPase"/>
</dbReference>
<dbReference type="InterPro" id="IPR011704">
    <property type="entry name" value="ATPase_dyneun-rel_AAA"/>
</dbReference>
<dbReference type="InterPro" id="IPR050764">
    <property type="entry name" value="CbbQ/NirQ/NorQ/GpvN"/>
</dbReference>
<dbReference type="InterPro" id="IPR001270">
    <property type="entry name" value="ClpA/B"/>
</dbReference>
<dbReference type="InterPro" id="IPR027417">
    <property type="entry name" value="P-loop_NTPase"/>
</dbReference>
<dbReference type="PANTHER" id="PTHR42759:SF1">
    <property type="entry name" value="MAGNESIUM-CHELATASE SUBUNIT CHLD"/>
    <property type="match status" value="1"/>
</dbReference>
<dbReference type="PANTHER" id="PTHR42759">
    <property type="entry name" value="MOXR FAMILY PROTEIN"/>
    <property type="match status" value="1"/>
</dbReference>
<dbReference type="Pfam" id="PF07728">
    <property type="entry name" value="AAA_5"/>
    <property type="match status" value="1"/>
</dbReference>
<dbReference type="PRINTS" id="PR00300">
    <property type="entry name" value="CLPPROTEASEA"/>
</dbReference>
<dbReference type="SMART" id="SM00382">
    <property type="entry name" value="AAA"/>
    <property type="match status" value="1"/>
</dbReference>
<dbReference type="SUPFAM" id="SSF52540">
    <property type="entry name" value="P-loop containing nucleoside triphosphate hydrolases"/>
    <property type="match status" value="1"/>
</dbReference>